<proteinExistence type="inferred from homology"/>
<gene>
    <name evidence="1" type="primary">secA1</name>
    <name type="ordered locus">Cgl0760</name>
    <name type="ordered locus">cg0868</name>
</gene>
<reference key="1">
    <citation type="journal article" date="2003" name="Appl. Microbiol. Biotechnol.">
        <title>The Corynebacterium glutamicum genome: features and impacts on biotechnological processes.</title>
        <authorList>
            <person name="Ikeda M."/>
            <person name="Nakagawa S."/>
        </authorList>
    </citation>
    <scope>NUCLEOTIDE SEQUENCE [LARGE SCALE GENOMIC DNA]</scope>
    <source>
        <strain>ATCC 13032 / DSM 20300 / JCM 1318 / BCRC 11384 / CCUG 27702 / LMG 3730 / NBRC 12168 / NCIMB 10025 / NRRL B-2784 / 534</strain>
    </source>
</reference>
<reference key="2">
    <citation type="journal article" date="2003" name="J. Biotechnol.">
        <title>The complete Corynebacterium glutamicum ATCC 13032 genome sequence and its impact on the production of L-aspartate-derived amino acids and vitamins.</title>
        <authorList>
            <person name="Kalinowski J."/>
            <person name="Bathe B."/>
            <person name="Bartels D."/>
            <person name="Bischoff N."/>
            <person name="Bott M."/>
            <person name="Burkovski A."/>
            <person name="Dusch N."/>
            <person name="Eggeling L."/>
            <person name="Eikmanns B.J."/>
            <person name="Gaigalat L."/>
            <person name="Goesmann A."/>
            <person name="Hartmann M."/>
            <person name="Huthmacher K."/>
            <person name="Kraemer R."/>
            <person name="Linke B."/>
            <person name="McHardy A.C."/>
            <person name="Meyer F."/>
            <person name="Moeckel B."/>
            <person name="Pfefferle W."/>
            <person name="Puehler A."/>
            <person name="Rey D.A."/>
            <person name="Rueckert C."/>
            <person name="Rupp O."/>
            <person name="Sahm H."/>
            <person name="Wendisch V.F."/>
            <person name="Wiegraebe I."/>
            <person name="Tauch A."/>
        </authorList>
    </citation>
    <scope>NUCLEOTIDE SEQUENCE [LARGE SCALE GENOMIC DNA]</scope>
    <source>
        <strain>ATCC 13032 / DSM 20300 / JCM 1318 / BCRC 11384 / CCUG 27702 / LMG 3730 / NBRC 12168 / NCIMB 10025 / NRRL B-2784 / 534</strain>
    </source>
</reference>
<dbReference type="EC" id="7.4.2.8" evidence="1"/>
<dbReference type="EMBL" id="BA000036">
    <property type="protein sequence ID" value="BAB98153.1"/>
    <property type="molecule type" value="Genomic_DNA"/>
</dbReference>
<dbReference type="EMBL" id="BX927150">
    <property type="protein sequence ID" value="CAF19463.1"/>
    <property type="molecule type" value="Genomic_DNA"/>
</dbReference>
<dbReference type="RefSeq" id="NP_599987.1">
    <property type="nucleotide sequence ID" value="NC_003450.3"/>
</dbReference>
<dbReference type="SMR" id="Q8NSB6"/>
<dbReference type="STRING" id="196627.cg0868"/>
<dbReference type="KEGG" id="cgb:cg0868"/>
<dbReference type="KEGG" id="cgl:Cgl0760"/>
<dbReference type="PATRIC" id="fig|196627.13.peg.743"/>
<dbReference type="eggNOG" id="COG0653">
    <property type="taxonomic scope" value="Bacteria"/>
</dbReference>
<dbReference type="HOGENOM" id="CLU_005314_3_2_11"/>
<dbReference type="OrthoDB" id="9805579at2"/>
<dbReference type="BioCyc" id="CORYNE:G18NG-10322-MONOMER"/>
<dbReference type="BRENDA" id="7.4.2.5">
    <property type="organism ID" value="960"/>
</dbReference>
<dbReference type="Proteomes" id="UP000000582">
    <property type="component" value="Chromosome"/>
</dbReference>
<dbReference type="Proteomes" id="UP000001009">
    <property type="component" value="Chromosome"/>
</dbReference>
<dbReference type="GO" id="GO:0031522">
    <property type="term" value="C:cell envelope Sec protein transport complex"/>
    <property type="evidence" value="ECO:0007669"/>
    <property type="project" value="TreeGrafter"/>
</dbReference>
<dbReference type="GO" id="GO:0005829">
    <property type="term" value="C:cytosol"/>
    <property type="evidence" value="ECO:0007669"/>
    <property type="project" value="TreeGrafter"/>
</dbReference>
<dbReference type="GO" id="GO:0005886">
    <property type="term" value="C:plasma membrane"/>
    <property type="evidence" value="ECO:0007669"/>
    <property type="project" value="UniProtKB-SubCell"/>
</dbReference>
<dbReference type="GO" id="GO:0005524">
    <property type="term" value="F:ATP binding"/>
    <property type="evidence" value="ECO:0007669"/>
    <property type="project" value="UniProtKB-UniRule"/>
</dbReference>
<dbReference type="GO" id="GO:0008564">
    <property type="term" value="F:protein-exporting ATPase activity"/>
    <property type="evidence" value="ECO:0007669"/>
    <property type="project" value="UniProtKB-EC"/>
</dbReference>
<dbReference type="GO" id="GO:0065002">
    <property type="term" value="P:intracellular protein transmembrane transport"/>
    <property type="evidence" value="ECO:0007669"/>
    <property type="project" value="UniProtKB-UniRule"/>
</dbReference>
<dbReference type="GO" id="GO:0017038">
    <property type="term" value="P:protein import"/>
    <property type="evidence" value="ECO:0007669"/>
    <property type="project" value="InterPro"/>
</dbReference>
<dbReference type="GO" id="GO:0006605">
    <property type="term" value="P:protein targeting"/>
    <property type="evidence" value="ECO:0007669"/>
    <property type="project" value="UniProtKB-UniRule"/>
</dbReference>
<dbReference type="GO" id="GO:0043952">
    <property type="term" value="P:protein transport by the Sec complex"/>
    <property type="evidence" value="ECO:0007669"/>
    <property type="project" value="TreeGrafter"/>
</dbReference>
<dbReference type="CDD" id="cd17928">
    <property type="entry name" value="DEXDc_SecA"/>
    <property type="match status" value="1"/>
</dbReference>
<dbReference type="CDD" id="cd18803">
    <property type="entry name" value="SF2_C_secA"/>
    <property type="match status" value="1"/>
</dbReference>
<dbReference type="FunFam" id="1.10.3060.10:FF:000002">
    <property type="entry name" value="Preprotein translocase subunit SecA"/>
    <property type="match status" value="1"/>
</dbReference>
<dbReference type="FunFam" id="3.40.50.300:FF:000113">
    <property type="entry name" value="Preprotein translocase subunit SecA"/>
    <property type="match status" value="1"/>
</dbReference>
<dbReference type="FunFam" id="3.40.50.300:FF:000246">
    <property type="entry name" value="Preprotein translocase subunit SecA"/>
    <property type="match status" value="1"/>
</dbReference>
<dbReference type="FunFam" id="3.40.50.300:FF:000334">
    <property type="entry name" value="Protein translocase subunit SecA"/>
    <property type="match status" value="1"/>
</dbReference>
<dbReference type="FunFam" id="3.90.1440.10:FF:000002">
    <property type="entry name" value="Protein translocase subunit SecA"/>
    <property type="match status" value="1"/>
</dbReference>
<dbReference type="Gene3D" id="1.10.3060.10">
    <property type="entry name" value="Helical scaffold and wing domains of SecA"/>
    <property type="match status" value="1"/>
</dbReference>
<dbReference type="Gene3D" id="3.40.50.300">
    <property type="entry name" value="P-loop containing nucleotide triphosphate hydrolases"/>
    <property type="match status" value="2"/>
</dbReference>
<dbReference type="Gene3D" id="3.90.1440.10">
    <property type="entry name" value="SecA, preprotein cross-linking domain"/>
    <property type="match status" value="1"/>
</dbReference>
<dbReference type="HAMAP" id="MF_01382">
    <property type="entry name" value="SecA"/>
    <property type="match status" value="1"/>
</dbReference>
<dbReference type="InterPro" id="IPR014001">
    <property type="entry name" value="Helicase_ATP-bd"/>
</dbReference>
<dbReference type="InterPro" id="IPR001650">
    <property type="entry name" value="Helicase_C-like"/>
</dbReference>
<dbReference type="InterPro" id="IPR027417">
    <property type="entry name" value="P-loop_NTPase"/>
</dbReference>
<dbReference type="InterPro" id="IPR000185">
    <property type="entry name" value="SecA"/>
</dbReference>
<dbReference type="InterPro" id="IPR020937">
    <property type="entry name" value="SecA_CS"/>
</dbReference>
<dbReference type="InterPro" id="IPR011115">
    <property type="entry name" value="SecA_DEAD"/>
</dbReference>
<dbReference type="InterPro" id="IPR014018">
    <property type="entry name" value="SecA_motor_DEAD"/>
</dbReference>
<dbReference type="InterPro" id="IPR011130">
    <property type="entry name" value="SecA_preprotein_X-link_dom"/>
</dbReference>
<dbReference type="InterPro" id="IPR044722">
    <property type="entry name" value="SecA_SF2_C"/>
</dbReference>
<dbReference type="InterPro" id="IPR011116">
    <property type="entry name" value="SecA_Wing/Scaffold"/>
</dbReference>
<dbReference type="InterPro" id="IPR036266">
    <property type="entry name" value="SecA_Wing/Scaffold_sf"/>
</dbReference>
<dbReference type="InterPro" id="IPR036670">
    <property type="entry name" value="SecA_X-link_sf"/>
</dbReference>
<dbReference type="NCBIfam" id="NF009538">
    <property type="entry name" value="PRK12904.1"/>
    <property type="match status" value="1"/>
</dbReference>
<dbReference type="NCBIfam" id="TIGR00963">
    <property type="entry name" value="secA"/>
    <property type="match status" value="1"/>
</dbReference>
<dbReference type="PANTHER" id="PTHR30612:SF0">
    <property type="entry name" value="CHLOROPLAST PROTEIN-TRANSPORTING ATPASE"/>
    <property type="match status" value="1"/>
</dbReference>
<dbReference type="PANTHER" id="PTHR30612">
    <property type="entry name" value="SECA INNER MEMBRANE COMPONENT OF SEC PROTEIN SECRETION SYSTEM"/>
    <property type="match status" value="1"/>
</dbReference>
<dbReference type="Pfam" id="PF21090">
    <property type="entry name" value="P-loop_SecA"/>
    <property type="match status" value="1"/>
</dbReference>
<dbReference type="Pfam" id="PF07517">
    <property type="entry name" value="SecA_DEAD"/>
    <property type="match status" value="1"/>
</dbReference>
<dbReference type="Pfam" id="PF01043">
    <property type="entry name" value="SecA_PP_bind"/>
    <property type="match status" value="1"/>
</dbReference>
<dbReference type="Pfam" id="PF07516">
    <property type="entry name" value="SecA_SW"/>
    <property type="match status" value="1"/>
</dbReference>
<dbReference type="PRINTS" id="PR00906">
    <property type="entry name" value="SECA"/>
</dbReference>
<dbReference type="SMART" id="SM00957">
    <property type="entry name" value="SecA_DEAD"/>
    <property type="match status" value="1"/>
</dbReference>
<dbReference type="SMART" id="SM00958">
    <property type="entry name" value="SecA_PP_bind"/>
    <property type="match status" value="1"/>
</dbReference>
<dbReference type="SUPFAM" id="SSF81886">
    <property type="entry name" value="Helical scaffold and wing domains of SecA"/>
    <property type="match status" value="1"/>
</dbReference>
<dbReference type="SUPFAM" id="SSF52540">
    <property type="entry name" value="P-loop containing nucleoside triphosphate hydrolases"/>
    <property type="match status" value="2"/>
</dbReference>
<dbReference type="SUPFAM" id="SSF81767">
    <property type="entry name" value="Pre-protein crosslinking domain of SecA"/>
    <property type="match status" value="1"/>
</dbReference>
<dbReference type="PROSITE" id="PS01312">
    <property type="entry name" value="SECA"/>
    <property type="match status" value="1"/>
</dbReference>
<dbReference type="PROSITE" id="PS51196">
    <property type="entry name" value="SECA_MOTOR_DEAD"/>
    <property type="match status" value="1"/>
</dbReference>
<name>SECA1_CORGL</name>
<accession>Q8NSB6</accession>
<accession>Q6M722</accession>
<feature type="chain" id="PRO_0000318341" description="Protein translocase subunit SecA 1">
    <location>
        <begin position="1"/>
        <end position="845"/>
    </location>
</feature>
<feature type="binding site" evidence="1">
    <location>
        <position position="85"/>
    </location>
    <ligand>
        <name>ATP</name>
        <dbReference type="ChEBI" id="CHEBI:30616"/>
    </ligand>
</feature>
<feature type="binding site" evidence="1">
    <location>
        <begin position="103"/>
        <end position="107"/>
    </location>
    <ligand>
        <name>ATP</name>
        <dbReference type="ChEBI" id="CHEBI:30616"/>
    </ligand>
</feature>
<feature type="binding site" evidence="1">
    <location>
        <position position="492"/>
    </location>
    <ligand>
        <name>ATP</name>
        <dbReference type="ChEBI" id="CHEBI:30616"/>
    </ligand>
</feature>
<sequence>MFGLSKVLRVGEGRAVKRLHKIADQVIALEDKFANLTDEELKAKTAEFKERIAGGEGLDEIFLEAFATAREAAWRVLGQKHYHVQIMGGAALHFGNVAEMRTGEGKTLTCVLPAYLNALEGKGVHVVTVNDYLAKRDAEMMGRVHRYLGLEVGVILSDMRPDERREAYAADITYGTNNELGFDYLRDNMARSLSDLVQRGHNYAIVDEVDSILIDEARTPLIISGPVDGTSQFYNVFAQIVPRMTKDVHYEVDERKKTVGVKEEGVEYVEDQLGIDNLYAPEHSQLVSYLNNAIKAQELFTRDKDYIVRNGEVMIVDGFTGRVLAGRRYNEGMHQAIEAKERVEIKNENQTLATVTLQNYFRLYTKLAGMTGTAETEAAELNQIYKLDVIAIPTNRPNQREDLTDLVYKTQEAKFAAVVDDIAERTEKGQPVLVGTVSVERSEYLSQLLTKRGIKHNVLNAKHHEQEAQIVAQAGLPGAVTVATNMAGRGTDIVLGGNPEILLDIKLRERGLDPFEDEESYQEAWDAELPAMKQRCEERGDKVREAGGLYVLGTERHESRRIDNQLRGRSARQGDPGSTRFYLSMRDDLMVRFVGPTMENMMNRLNVPDDVPIESKTVTNSIKGAQAQVENQNFEMRKNVLKYDEVMNEQRKVIYSERREILESADISRYIQNMIEETVSAYVDGATANGYVEDWDLDKLWNALEALYDPSINWTDLVEGSEYGKPGELSAEDLRTALVNDAHAEYAKLEEAVSAIGGEAQIRNIERMVLMPVIDTKWREHLYEMDYLKEGIGLRAMAQRDPLVEYQKEGGDMFNGMKDGIKEETVRQLFLLRKQFIKQDAEVAD</sequence>
<evidence type="ECO:0000255" key="1">
    <source>
        <dbReference type="HAMAP-Rule" id="MF_01382"/>
    </source>
</evidence>
<protein>
    <recommendedName>
        <fullName evidence="1">Protein translocase subunit SecA 1</fullName>
        <ecNumber evidence="1">7.4.2.8</ecNumber>
    </recommendedName>
</protein>
<comment type="function">
    <text evidence="1">Part of the Sec protein translocase complex. Interacts with the SecYEG preprotein conducting channel. Has a central role in coupling the hydrolysis of ATP to the transfer of proteins into and across the cell membrane, serving as an ATP-driven molecular motor driving the stepwise translocation of polypeptide chains across the membrane.</text>
</comment>
<comment type="catalytic activity">
    <reaction evidence="1">
        <text>ATP + H2O + cellular proteinSide 1 = ADP + phosphate + cellular proteinSide 2.</text>
        <dbReference type="EC" id="7.4.2.8"/>
    </reaction>
</comment>
<comment type="subunit">
    <text evidence="1">Monomer and homodimer. Part of the essential Sec protein translocation apparatus which comprises SecA, SecYEG and auxiliary proteins SecDF. Other proteins may also be involved.</text>
</comment>
<comment type="subcellular location">
    <subcellularLocation>
        <location evidence="1">Cell membrane</location>
        <topology evidence="1">Peripheral membrane protein</topology>
        <orientation evidence="1">Cytoplasmic side</orientation>
    </subcellularLocation>
    <subcellularLocation>
        <location evidence="1">Cytoplasm</location>
    </subcellularLocation>
    <text evidence="1">Distribution is 50-50.</text>
</comment>
<comment type="similarity">
    <text evidence="1">Belongs to the SecA family.</text>
</comment>
<keyword id="KW-0067">ATP-binding</keyword>
<keyword id="KW-1003">Cell membrane</keyword>
<keyword id="KW-0963">Cytoplasm</keyword>
<keyword id="KW-0472">Membrane</keyword>
<keyword id="KW-0547">Nucleotide-binding</keyword>
<keyword id="KW-0653">Protein transport</keyword>
<keyword id="KW-1185">Reference proteome</keyword>
<keyword id="KW-1278">Translocase</keyword>
<keyword id="KW-0811">Translocation</keyword>
<keyword id="KW-0813">Transport</keyword>
<organism>
    <name type="scientific">Corynebacterium glutamicum (strain ATCC 13032 / DSM 20300 / JCM 1318 / BCRC 11384 / CCUG 27702 / LMG 3730 / NBRC 12168 / NCIMB 10025 / NRRL B-2784 / 534)</name>
    <dbReference type="NCBI Taxonomy" id="196627"/>
    <lineage>
        <taxon>Bacteria</taxon>
        <taxon>Bacillati</taxon>
        <taxon>Actinomycetota</taxon>
        <taxon>Actinomycetes</taxon>
        <taxon>Mycobacteriales</taxon>
        <taxon>Corynebacteriaceae</taxon>
        <taxon>Corynebacterium</taxon>
    </lineage>
</organism>